<dbReference type="EC" id="2.7.7.90" evidence="1"/>
<dbReference type="EMBL" id="CP000961">
    <property type="protein sequence ID" value="ACA86464.1"/>
    <property type="molecule type" value="Genomic_DNA"/>
</dbReference>
<dbReference type="RefSeq" id="WP_012324808.1">
    <property type="nucleotide sequence ID" value="NC_010506.1"/>
</dbReference>
<dbReference type="SMR" id="B1KDR7"/>
<dbReference type="STRING" id="392500.Swoo_2182"/>
<dbReference type="KEGG" id="swd:Swoo_2182"/>
<dbReference type="eggNOG" id="COG1212">
    <property type="taxonomic scope" value="Bacteria"/>
</dbReference>
<dbReference type="HOGENOM" id="CLU_065038_0_1_6"/>
<dbReference type="UniPathway" id="UPA00030"/>
<dbReference type="Proteomes" id="UP000002168">
    <property type="component" value="Chromosome"/>
</dbReference>
<dbReference type="GO" id="GO:0005829">
    <property type="term" value="C:cytosol"/>
    <property type="evidence" value="ECO:0007669"/>
    <property type="project" value="TreeGrafter"/>
</dbReference>
<dbReference type="GO" id="GO:0008690">
    <property type="term" value="F:3-deoxy-manno-octulosonate cytidylyltransferase activity"/>
    <property type="evidence" value="ECO:0007669"/>
    <property type="project" value="InterPro"/>
</dbReference>
<dbReference type="GO" id="GO:0009103">
    <property type="term" value="P:lipopolysaccharide biosynthetic process"/>
    <property type="evidence" value="ECO:0007669"/>
    <property type="project" value="UniProtKB-UniRule"/>
</dbReference>
<dbReference type="CDD" id="cd02517">
    <property type="entry name" value="CMP-KDO-Synthetase"/>
    <property type="match status" value="1"/>
</dbReference>
<dbReference type="FunFam" id="3.90.550.10:FF:000011">
    <property type="entry name" value="3-deoxy-manno-octulosonate cytidylyltransferase"/>
    <property type="match status" value="1"/>
</dbReference>
<dbReference type="Gene3D" id="3.90.550.10">
    <property type="entry name" value="Spore Coat Polysaccharide Biosynthesis Protein SpsA, Chain A"/>
    <property type="match status" value="1"/>
</dbReference>
<dbReference type="HAMAP" id="MF_00057">
    <property type="entry name" value="KdsB"/>
    <property type="match status" value="1"/>
</dbReference>
<dbReference type="InterPro" id="IPR003329">
    <property type="entry name" value="Cytidylyl_trans"/>
</dbReference>
<dbReference type="InterPro" id="IPR004528">
    <property type="entry name" value="KdsB"/>
</dbReference>
<dbReference type="InterPro" id="IPR029044">
    <property type="entry name" value="Nucleotide-diphossugar_trans"/>
</dbReference>
<dbReference type="NCBIfam" id="TIGR00466">
    <property type="entry name" value="kdsB"/>
    <property type="match status" value="1"/>
</dbReference>
<dbReference type="NCBIfam" id="NF003950">
    <property type="entry name" value="PRK05450.1-3"/>
    <property type="match status" value="1"/>
</dbReference>
<dbReference type="NCBIfam" id="NF003952">
    <property type="entry name" value="PRK05450.1-5"/>
    <property type="match status" value="1"/>
</dbReference>
<dbReference type="NCBIfam" id="NF009905">
    <property type="entry name" value="PRK13368.1"/>
    <property type="match status" value="1"/>
</dbReference>
<dbReference type="PANTHER" id="PTHR42866">
    <property type="entry name" value="3-DEOXY-MANNO-OCTULOSONATE CYTIDYLYLTRANSFERASE"/>
    <property type="match status" value="1"/>
</dbReference>
<dbReference type="PANTHER" id="PTHR42866:SF2">
    <property type="entry name" value="3-DEOXY-MANNO-OCTULOSONATE CYTIDYLYLTRANSFERASE, MITOCHONDRIAL"/>
    <property type="match status" value="1"/>
</dbReference>
<dbReference type="Pfam" id="PF02348">
    <property type="entry name" value="CTP_transf_3"/>
    <property type="match status" value="1"/>
</dbReference>
<dbReference type="SUPFAM" id="SSF53448">
    <property type="entry name" value="Nucleotide-diphospho-sugar transferases"/>
    <property type="match status" value="1"/>
</dbReference>
<accession>B1KDR7</accession>
<name>KDSB_SHEWM</name>
<evidence type="ECO:0000255" key="1">
    <source>
        <dbReference type="HAMAP-Rule" id="MF_00057"/>
    </source>
</evidence>
<protein>
    <recommendedName>
        <fullName evidence="1">8-amino-3,8-dideoxy-manno-octulosonate cytidylyltransferase</fullName>
        <ecNumber evidence="1">2.7.7.90</ecNumber>
    </recommendedName>
    <alternativeName>
        <fullName evidence="1">CMP-8-amino-3,8-dideoxy-manno-octulosonate synthase</fullName>
    </alternativeName>
</protein>
<sequence length="245" mass="27314">MNVTLLIPARYGSSRFPGKPLAPINGKPMIQHVYERASLAKGLTAIYVATDDDRIKEAVEAFGGKVVMTDPQAASGTDRIEDAITQLGLKDDDLIVNLQGDQPLIDPISIEQVITLFERHPGEFSMATLGVEITEKAELDDPKHVKMVFDNNFNALYFSRARIPFGRDTNDYPVYKHLGIYAYTRSFISTFAKLPLGRLEDLEKLEQLRALEHGHKIKVAISAFDSPEVDTPEDIRICEARLAVD</sequence>
<organism>
    <name type="scientific">Shewanella woodyi (strain ATCC 51908 / MS32)</name>
    <dbReference type="NCBI Taxonomy" id="392500"/>
    <lineage>
        <taxon>Bacteria</taxon>
        <taxon>Pseudomonadati</taxon>
        <taxon>Pseudomonadota</taxon>
        <taxon>Gammaproteobacteria</taxon>
        <taxon>Alteromonadales</taxon>
        <taxon>Shewanellaceae</taxon>
        <taxon>Shewanella</taxon>
    </lineage>
</organism>
<reference key="1">
    <citation type="submission" date="2008-02" db="EMBL/GenBank/DDBJ databases">
        <title>Complete sequence of Shewanella woodyi ATCC 51908.</title>
        <authorList>
            <consortium name="US DOE Joint Genome Institute"/>
            <person name="Copeland A."/>
            <person name="Lucas S."/>
            <person name="Lapidus A."/>
            <person name="Glavina del Rio T."/>
            <person name="Dalin E."/>
            <person name="Tice H."/>
            <person name="Bruce D."/>
            <person name="Goodwin L."/>
            <person name="Pitluck S."/>
            <person name="Sims D."/>
            <person name="Brettin T."/>
            <person name="Detter J.C."/>
            <person name="Han C."/>
            <person name="Kuske C.R."/>
            <person name="Schmutz J."/>
            <person name="Larimer F."/>
            <person name="Land M."/>
            <person name="Hauser L."/>
            <person name="Kyrpides N."/>
            <person name="Lykidis A."/>
            <person name="Zhao J.-S."/>
            <person name="Richardson P."/>
        </authorList>
    </citation>
    <scope>NUCLEOTIDE SEQUENCE [LARGE SCALE GENOMIC DNA]</scope>
    <source>
        <strain>ATCC 51908 / MS32</strain>
    </source>
</reference>
<comment type="function">
    <text evidence="1">Activates KDO8N (a required 8-carbon sugar) for incorporation into bacterial lipopolysaccharide in the Shewanella genus.</text>
</comment>
<comment type="catalytic activity">
    <reaction evidence="1">
        <text>8-amino-3,8-dideoxy-alpha-D-manno-octulosonate + CTP = CMP-8-amino-3,8-dideoxy-alpha-D-manno-oct-2-ulosonate + diphosphate</text>
        <dbReference type="Rhea" id="RHEA:49284"/>
        <dbReference type="ChEBI" id="CHEBI:33019"/>
        <dbReference type="ChEBI" id="CHEBI:37563"/>
        <dbReference type="ChEBI" id="CHEBI:87091"/>
        <dbReference type="ChEBI" id="CHEBI:91089"/>
        <dbReference type="EC" id="2.7.7.90"/>
    </reaction>
</comment>
<comment type="pathway">
    <text evidence="1">Bacterial outer membrane biogenesis; lipopolysaccharide biosynthesis.</text>
</comment>
<comment type="subcellular location">
    <subcellularLocation>
        <location evidence="1">Cytoplasm</location>
    </subcellularLocation>
</comment>
<comment type="similarity">
    <text evidence="1">Belongs to the KdsB family.</text>
</comment>
<proteinExistence type="inferred from homology"/>
<gene>
    <name evidence="1" type="primary">kdsB</name>
    <name type="ordered locus">Swoo_2182</name>
</gene>
<feature type="chain" id="PRO_0000370161" description="8-amino-3,8-dideoxy-manno-octulosonate cytidylyltransferase">
    <location>
        <begin position="1"/>
        <end position="245"/>
    </location>
</feature>
<keyword id="KW-0963">Cytoplasm</keyword>
<keyword id="KW-0448">Lipopolysaccharide biosynthesis</keyword>
<keyword id="KW-0548">Nucleotidyltransferase</keyword>
<keyword id="KW-1185">Reference proteome</keyword>
<keyword id="KW-0808">Transferase</keyword>